<keyword id="KW-0028">Amino-acid biosynthesis</keyword>
<keyword id="KW-0963">Cytoplasm</keyword>
<keyword id="KW-0368">Histidine biosynthesis</keyword>
<reference key="1">
    <citation type="submission" date="2008-04" db="EMBL/GenBank/DDBJ databases">
        <title>Complete sequence of chromosome 1 of Burkholderia ambifaria MC40-6.</title>
        <authorList>
            <person name="Copeland A."/>
            <person name="Lucas S."/>
            <person name="Lapidus A."/>
            <person name="Glavina del Rio T."/>
            <person name="Dalin E."/>
            <person name="Tice H."/>
            <person name="Pitluck S."/>
            <person name="Chain P."/>
            <person name="Malfatti S."/>
            <person name="Shin M."/>
            <person name="Vergez L."/>
            <person name="Lang D."/>
            <person name="Schmutz J."/>
            <person name="Larimer F."/>
            <person name="Land M."/>
            <person name="Hauser L."/>
            <person name="Kyrpides N."/>
            <person name="Lykidis A."/>
            <person name="Ramette A."/>
            <person name="Konstantinidis K."/>
            <person name="Tiedje J."/>
            <person name="Richardson P."/>
        </authorList>
    </citation>
    <scope>NUCLEOTIDE SEQUENCE [LARGE SCALE GENOMIC DNA]</scope>
    <source>
        <strain>MC40-6</strain>
    </source>
</reference>
<evidence type="ECO:0000255" key="1">
    <source>
        <dbReference type="HAMAP-Rule" id="MF_00125"/>
    </source>
</evidence>
<comment type="function">
    <text evidence="1">Required for the first step of histidine biosynthesis. May allow the feedback regulation of ATP phosphoribosyltransferase activity by histidine.</text>
</comment>
<comment type="pathway">
    <text evidence="1">Amino-acid biosynthesis; L-histidine biosynthesis; L-histidine from 5-phospho-alpha-D-ribose 1-diphosphate: step 1/9.</text>
</comment>
<comment type="subunit">
    <text evidence="1">Heteromultimer composed of HisG and HisZ subunits.</text>
</comment>
<comment type="subcellular location">
    <subcellularLocation>
        <location evidence="1">Cytoplasm</location>
    </subcellularLocation>
</comment>
<comment type="miscellaneous">
    <text>This function is generally fulfilled by the C-terminal part of HisG, which is missing in some bacteria such as this one.</text>
</comment>
<comment type="similarity">
    <text evidence="1">Belongs to the class-II aminoacyl-tRNA synthetase family. HisZ subfamily.</text>
</comment>
<feature type="chain" id="PRO_1000095448" description="ATP phosphoribosyltransferase regulatory subunit">
    <location>
        <begin position="1"/>
        <end position="382"/>
    </location>
</feature>
<organism>
    <name type="scientific">Burkholderia ambifaria (strain MC40-6)</name>
    <dbReference type="NCBI Taxonomy" id="398577"/>
    <lineage>
        <taxon>Bacteria</taxon>
        <taxon>Pseudomonadati</taxon>
        <taxon>Pseudomonadota</taxon>
        <taxon>Betaproteobacteria</taxon>
        <taxon>Burkholderiales</taxon>
        <taxon>Burkholderiaceae</taxon>
        <taxon>Burkholderia</taxon>
        <taxon>Burkholderia cepacia complex</taxon>
    </lineage>
</organism>
<proteinExistence type="inferred from homology"/>
<sequence length="382" mass="41627">MSTWLLPENIADVLPSEARKIEELRRRLLDRFRSYGYEMVMPPLLEYLESLLTSGGADLRLRTFKLVDQLSGRTLGLRADITPQVARIDAHLLNRQGVTRLCYAGHVMHTRPRGLHATREQIQIGAEIYGHAGLEADLEIQQLMLDALHLAGLSRIRLDLCHAGVLAALLARDPQAAERGESLYDALSGKDVPLLNELTDDLGADTRAALCALPHLYGDASVLDEARARLPVLPEITRALDDLAQLAAQAKGVEVAIDLADLRGYAYHSGAMFTAYIDGVPNAIARGGRYDHVGQAYGRARPATGFSLDLRELARISPIEARGTAILAPWAQDDALGAAVAALRDAGEVVIQALPGHDHVLDEFACDRSLVERNGAWVVEPR</sequence>
<protein>
    <recommendedName>
        <fullName evidence="1">ATP phosphoribosyltransferase regulatory subunit</fullName>
    </recommendedName>
</protein>
<dbReference type="EMBL" id="CP001025">
    <property type="protein sequence ID" value="ACB64198.1"/>
    <property type="molecule type" value="Genomic_DNA"/>
</dbReference>
<dbReference type="RefSeq" id="WP_012363987.1">
    <property type="nucleotide sequence ID" value="NC_010551.1"/>
</dbReference>
<dbReference type="SMR" id="B1YR34"/>
<dbReference type="KEGG" id="bac:BamMC406_1713"/>
<dbReference type="HOGENOM" id="CLU_025113_0_1_4"/>
<dbReference type="OrthoDB" id="9769617at2"/>
<dbReference type="UniPathway" id="UPA00031">
    <property type="reaction ID" value="UER00006"/>
</dbReference>
<dbReference type="Proteomes" id="UP000001680">
    <property type="component" value="Chromosome 1"/>
</dbReference>
<dbReference type="GO" id="GO:0005737">
    <property type="term" value="C:cytoplasm"/>
    <property type="evidence" value="ECO:0007669"/>
    <property type="project" value="UniProtKB-SubCell"/>
</dbReference>
<dbReference type="GO" id="GO:0004821">
    <property type="term" value="F:histidine-tRNA ligase activity"/>
    <property type="evidence" value="ECO:0007669"/>
    <property type="project" value="TreeGrafter"/>
</dbReference>
<dbReference type="GO" id="GO:0006427">
    <property type="term" value="P:histidyl-tRNA aminoacylation"/>
    <property type="evidence" value="ECO:0007669"/>
    <property type="project" value="TreeGrafter"/>
</dbReference>
<dbReference type="GO" id="GO:0000105">
    <property type="term" value="P:L-histidine biosynthetic process"/>
    <property type="evidence" value="ECO:0007669"/>
    <property type="project" value="UniProtKB-UniRule"/>
</dbReference>
<dbReference type="CDD" id="cd00773">
    <property type="entry name" value="HisRS-like_core"/>
    <property type="match status" value="1"/>
</dbReference>
<dbReference type="Gene3D" id="3.30.930.10">
    <property type="entry name" value="Bira Bifunctional Protein, Domain 2"/>
    <property type="match status" value="1"/>
</dbReference>
<dbReference type="HAMAP" id="MF_00125">
    <property type="entry name" value="HisZ"/>
    <property type="match status" value="1"/>
</dbReference>
<dbReference type="InterPro" id="IPR045864">
    <property type="entry name" value="aa-tRNA-synth_II/BPL/LPL"/>
</dbReference>
<dbReference type="InterPro" id="IPR041715">
    <property type="entry name" value="HisRS-like_core"/>
</dbReference>
<dbReference type="InterPro" id="IPR004516">
    <property type="entry name" value="HisRS/HisZ"/>
</dbReference>
<dbReference type="InterPro" id="IPR004517">
    <property type="entry name" value="HisZ"/>
</dbReference>
<dbReference type="NCBIfam" id="TIGR00443">
    <property type="entry name" value="hisZ_biosyn_reg"/>
    <property type="match status" value="1"/>
</dbReference>
<dbReference type="NCBIfam" id="NF008935">
    <property type="entry name" value="PRK12292.1-1"/>
    <property type="match status" value="1"/>
</dbReference>
<dbReference type="NCBIfam" id="NF009086">
    <property type="entry name" value="PRK12421.1"/>
    <property type="match status" value="1"/>
</dbReference>
<dbReference type="PANTHER" id="PTHR43707:SF1">
    <property type="entry name" value="HISTIDINE--TRNA LIGASE, MITOCHONDRIAL-RELATED"/>
    <property type="match status" value="1"/>
</dbReference>
<dbReference type="PANTHER" id="PTHR43707">
    <property type="entry name" value="HISTIDYL-TRNA SYNTHETASE"/>
    <property type="match status" value="1"/>
</dbReference>
<dbReference type="Pfam" id="PF13393">
    <property type="entry name" value="tRNA-synt_His"/>
    <property type="match status" value="1"/>
</dbReference>
<dbReference type="PIRSF" id="PIRSF001549">
    <property type="entry name" value="His-tRNA_synth"/>
    <property type="match status" value="1"/>
</dbReference>
<dbReference type="SUPFAM" id="SSF55681">
    <property type="entry name" value="Class II aaRS and biotin synthetases"/>
    <property type="match status" value="1"/>
</dbReference>
<accession>B1YR34</accession>
<gene>
    <name evidence="1" type="primary">hisZ</name>
    <name type="ordered locus">BamMC406_1713</name>
</gene>
<name>HISZ_BURA4</name>